<evidence type="ECO:0000255" key="1">
    <source>
        <dbReference type="HAMAP-Rule" id="MF_01866"/>
    </source>
</evidence>
<evidence type="ECO:0000256" key="2">
    <source>
        <dbReference type="SAM" id="MobiDB-lite"/>
    </source>
</evidence>
<gene>
    <name evidence="1" type="primary">ycgL</name>
    <name type="ordered locus">SCH_1806</name>
</gene>
<feature type="chain" id="PRO_0000375350" description="Protein YcgL">
    <location>
        <begin position="1"/>
        <end position="110"/>
    </location>
</feature>
<feature type="domain" description="YcgL" evidence="1">
    <location>
        <begin position="14"/>
        <end position="98"/>
    </location>
</feature>
<feature type="region of interest" description="Disordered" evidence="2">
    <location>
        <begin position="87"/>
        <end position="110"/>
    </location>
</feature>
<feature type="compositionally biased region" description="Polar residues" evidence="2">
    <location>
        <begin position="97"/>
        <end position="110"/>
    </location>
</feature>
<sequence>MRQVTIPLIQSKSMFCVIYRSSKRDQTYLYVEKKDDFSRVPEALMKGFGQPQLAMMLPLDGRKKLVNAELEKVKQALSEQGYYLQLPPPPEDLLKQHLSSVGQNTSPADR</sequence>
<dbReference type="EMBL" id="AE017220">
    <property type="protein sequence ID" value="AAX65712.1"/>
    <property type="molecule type" value="Genomic_DNA"/>
</dbReference>
<dbReference type="SMR" id="Q57NJ9"/>
<dbReference type="KEGG" id="sec:SCH_1806"/>
<dbReference type="HOGENOM" id="CLU_155118_1_0_6"/>
<dbReference type="Proteomes" id="UP000000538">
    <property type="component" value="Chromosome"/>
</dbReference>
<dbReference type="Gene3D" id="3.10.510.20">
    <property type="entry name" value="YcgL domain"/>
    <property type="match status" value="1"/>
</dbReference>
<dbReference type="HAMAP" id="MF_01866">
    <property type="entry name" value="UPF0745"/>
    <property type="match status" value="1"/>
</dbReference>
<dbReference type="InterPro" id="IPR038068">
    <property type="entry name" value="YcgL-like_sf"/>
</dbReference>
<dbReference type="InterPro" id="IPR027354">
    <property type="entry name" value="YcgL_dom"/>
</dbReference>
<dbReference type="PANTHER" id="PTHR38109">
    <property type="entry name" value="PROTEIN YCGL"/>
    <property type="match status" value="1"/>
</dbReference>
<dbReference type="PANTHER" id="PTHR38109:SF1">
    <property type="entry name" value="PROTEIN YCGL"/>
    <property type="match status" value="1"/>
</dbReference>
<dbReference type="Pfam" id="PF05166">
    <property type="entry name" value="YcgL"/>
    <property type="match status" value="1"/>
</dbReference>
<dbReference type="SUPFAM" id="SSF160191">
    <property type="entry name" value="YcgL-like"/>
    <property type="match status" value="1"/>
</dbReference>
<dbReference type="PROSITE" id="PS51648">
    <property type="entry name" value="YCGL"/>
    <property type="match status" value="1"/>
</dbReference>
<accession>Q57NJ9</accession>
<proteinExistence type="inferred from homology"/>
<organism>
    <name type="scientific">Salmonella choleraesuis (strain SC-B67)</name>
    <dbReference type="NCBI Taxonomy" id="321314"/>
    <lineage>
        <taxon>Bacteria</taxon>
        <taxon>Pseudomonadati</taxon>
        <taxon>Pseudomonadota</taxon>
        <taxon>Gammaproteobacteria</taxon>
        <taxon>Enterobacterales</taxon>
        <taxon>Enterobacteriaceae</taxon>
        <taxon>Salmonella</taxon>
    </lineage>
</organism>
<name>YCGL_SALCH</name>
<protein>
    <recommendedName>
        <fullName evidence="1">Protein YcgL</fullName>
    </recommendedName>
</protein>
<reference key="1">
    <citation type="journal article" date="2005" name="Nucleic Acids Res.">
        <title>The genome sequence of Salmonella enterica serovar Choleraesuis, a highly invasive and resistant zoonotic pathogen.</title>
        <authorList>
            <person name="Chiu C.-H."/>
            <person name="Tang P."/>
            <person name="Chu C."/>
            <person name="Hu S."/>
            <person name="Bao Q."/>
            <person name="Yu J."/>
            <person name="Chou Y.-Y."/>
            <person name="Wang H.-S."/>
            <person name="Lee Y.-S."/>
        </authorList>
    </citation>
    <scope>NUCLEOTIDE SEQUENCE [LARGE SCALE GENOMIC DNA]</scope>
    <source>
        <strain>SC-B67</strain>
    </source>
</reference>